<organism>
    <name type="scientific">Escherichia coli O7:K1 (strain IAI39 / ExPEC)</name>
    <dbReference type="NCBI Taxonomy" id="585057"/>
    <lineage>
        <taxon>Bacteria</taxon>
        <taxon>Pseudomonadati</taxon>
        <taxon>Pseudomonadota</taxon>
        <taxon>Gammaproteobacteria</taxon>
        <taxon>Enterobacterales</taxon>
        <taxon>Enterobacteriaceae</taxon>
        <taxon>Escherichia</taxon>
    </lineage>
</organism>
<dbReference type="EC" id="3.1.-.-" evidence="1"/>
<dbReference type="EMBL" id="CU928164">
    <property type="protein sequence ID" value="CAR20913.1"/>
    <property type="molecule type" value="Genomic_DNA"/>
</dbReference>
<dbReference type="RefSeq" id="WP_000132602.1">
    <property type="nucleotide sequence ID" value="NC_011750.1"/>
</dbReference>
<dbReference type="RefSeq" id="YP_002410667.1">
    <property type="nucleotide sequence ID" value="NC_011750.1"/>
</dbReference>
<dbReference type="STRING" id="585057.ECIAI39_4816"/>
<dbReference type="KEGG" id="ect:ECIAI39_4816"/>
<dbReference type="PATRIC" id="fig|585057.6.peg.4974"/>
<dbReference type="HOGENOM" id="CLU_151239_0_0_6"/>
<dbReference type="Proteomes" id="UP000000749">
    <property type="component" value="Chromosome"/>
</dbReference>
<dbReference type="GO" id="GO:0005737">
    <property type="term" value="C:cytoplasm"/>
    <property type="evidence" value="ECO:0007669"/>
    <property type="project" value="UniProtKB-SubCell"/>
</dbReference>
<dbReference type="GO" id="GO:0003677">
    <property type="term" value="F:DNA binding"/>
    <property type="evidence" value="ECO:0007669"/>
    <property type="project" value="UniProtKB-KW"/>
</dbReference>
<dbReference type="GO" id="GO:0003723">
    <property type="term" value="F:RNA binding"/>
    <property type="evidence" value="ECO:0007669"/>
    <property type="project" value="UniProtKB-KW"/>
</dbReference>
<dbReference type="GO" id="GO:0004521">
    <property type="term" value="F:RNA endonuclease activity"/>
    <property type="evidence" value="ECO:0007669"/>
    <property type="project" value="UniProtKB-UniRule"/>
</dbReference>
<dbReference type="GO" id="GO:0016070">
    <property type="term" value="P:RNA metabolic process"/>
    <property type="evidence" value="ECO:0007669"/>
    <property type="project" value="InterPro"/>
</dbReference>
<dbReference type="HAMAP" id="MF_01193">
    <property type="entry name" value="Endoribonucl_SymE"/>
    <property type="match status" value="1"/>
</dbReference>
<dbReference type="InterPro" id="IPR007159">
    <property type="entry name" value="SpoVT-AbrB_dom"/>
</dbReference>
<dbReference type="InterPro" id="IPR014944">
    <property type="entry name" value="Toxin_SymE-like"/>
</dbReference>
<dbReference type="InterPro" id="IPR020883">
    <property type="entry name" value="TypeI_TA_SymE"/>
</dbReference>
<dbReference type="NCBIfam" id="NF010128">
    <property type="entry name" value="PRK13605.1"/>
    <property type="match status" value="1"/>
</dbReference>
<dbReference type="Pfam" id="PF08845">
    <property type="entry name" value="SymE_toxin"/>
    <property type="match status" value="1"/>
</dbReference>
<dbReference type="PROSITE" id="PS51740">
    <property type="entry name" value="SPOVT_ABRB"/>
    <property type="match status" value="1"/>
</dbReference>
<reference key="1">
    <citation type="journal article" date="2009" name="PLoS Genet.">
        <title>Organised genome dynamics in the Escherichia coli species results in highly diverse adaptive paths.</title>
        <authorList>
            <person name="Touchon M."/>
            <person name="Hoede C."/>
            <person name="Tenaillon O."/>
            <person name="Barbe V."/>
            <person name="Baeriswyl S."/>
            <person name="Bidet P."/>
            <person name="Bingen E."/>
            <person name="Bonacorsi S."/>
            <person name="Bouchier C."/>
            <person name="Bouvet O."/>
            <person name="Calteau A."/>
            <person name="Chiapello H."/>
            <person name="Clermont O."/>
            <person name="Cruveiller S."/>
            <person name="Danchin A."/>
            <person name="Diard M."/>
            <person name="Dossat C."/>
            <person name="Karoui M.E."/>
            <person name="Frapy E."/>
            <person name="Garry L."/>
            <person name="Ghigo J.M."/>
            <person name="Gilles A.M."/>
            <person name="Johnson J."/>
            <person name="Le Bouguenec C."/>
            <person name="Lescat M."/>
            <person name="Mangenot S."/>
            <person name="Martinez-Jehanne V."/>
            <person name="Matic I."/>
            <person name="Nassif X."/>
            <person name="Oztas S."/>
            <person name="Petit M.A."/>
            <person name="Pichon C."/>
            <person name="Rouy Z."/>
            <person name="Ruf C.S."/>
            <person name="Schneider D."/>
            <person name="Tourret J."/>
            <person name="Vacherie B."/>
            <person name="Vallenet D."/>
            <person name="Medigue C."/>
            <person name="Rocha E.P.C."/>
            <person name="Denamur E."/>
        </authorList>
    </citation>
    <scope>NUCLEOTIDE SEQUENCE [LARGE SCALE GENOMIC DNA]</scope>
    <source>
        <strain>IAI39 / ExPEC</strain>
    </source>
</reference>
<accession>B7NVB3</accession>
<sequence length="113" mass="12264">MTDTHSIAQPFEAEVSPANNRQLTVSYAGRYPDYSRIPAITLKGQWLEVAGFATGTAVDVKVMEGCIVLTAQPPAAEEGELMQSLRQVCKLSARKQKQVQEFIGVIAGKQKVA</sequence>
<protein>
    <recommendedName>
        <fullName evidence="1">Endoribonuclease SymE</fullName>
        <ecNumber evidence="1">3.1.-.-</ecNumber>
    </recommendedName>
</protein>
<keyword id="KW-0963">Cytoplasm</keyword>
<keyword id="KW-0238">DNA-binding</keyword>
<keyword id="KW-0255">Endonuclease</keyword>
<keyword id="KW-0378">Hydrolase</keyword>
<keyword id="KW-0540">Nuclease</keyword>
<keyword id="KW-0694">RNA-binding</keyword>
<evidence type="ECO:0000255" key="1">
    <source>
        <dbReference type="HAMAP-Rule" id="MF_01193"/>
    </source>
</evidence>
<evidence type="ECO:0000255" key="2">
    <source>
        <dbReference type="PROSITE-ProRule" id="PRU01076"/>
    </source>
</evidence>
<comment type="function">
    <text evidence="1">Involved in the degradation and recycling of damaged RNA. It is itself a target for degradation by the ATP-dependent protease Lon.</text>
</comment>
<comment type="subcellular location">
    <subcellularLocation>
        <location evidence="1">Cytoplasm</location>
    </subcellularLocation>
</comment>
<comment type="similarity">
    <text evidence="1">Belongs to the SymE family.</text>
</comment>
<gene>
    <name evidence="1" type="primary">symE</name>
    <name type="ordered locus">ECIAI39_4816</name>
</gene>
<name>SYME_ECO7I</name>
<proteinExistence type="inferred from homology"/>
<feature type="chain" id="PRO_1000138401" description="Endoribonuclease SymE">
    <location>
        <begin position="1"/>
        <end position="113"/>
    </location>
</feature>
<feature type="domain" description="SpoVT-AbrB" evidence="2">
    <location>
        <begin position="29"/>
        <end position="74"/>
    </location>
</feature>